<accession>P35696</accession>
<reference key="1">
    <citation type="journal article" date="1992" name="Phytochemistry">
        <title>Structures of elicitin isoforms secreted by Phytophthora drechsleri.</title>
        <authorList>
            <person name="Huet J.-C."/>
            <person name="Nespoulous C."/>
            <person name="Pernollet J.-C."/>
        </authorList>
    </citation>
    <scope>PROTEIN SEQUENCE</scope>
</reference>
<feature type="chain" id="PRO_0000185438" description="Alpha-elicitin DRE-alpha">
    <location>
        <begin position="1"/>
        <end position="98"/>
    </location>
</feature>
<feature type="disulfide bond" evidence="1">
    <location>
        <begin position="3"/>
        <end position="71"/>
    </location>
</feature>
<feature type="disulfide bond" evidence="1">
    <location>
        <begin position="27"/>
        <end position="56"/>
    </location>
</feature>
<feature type="disulfide bond" evidence="1">
    <location>
        <begin position="51"/>
        <end position="95"/>
    </location>
</feature>
<proteinExistence type="evidence at protein level"/>
<protein>
    <recommendedName>
        <fullName>Alpha-elicitin DRE-alpha</fullName>
    </recommendedName>
</protein>
<organism>
    <name type="scientific">Phytophthora drechsleri</name>
    <dbReference type="NCBI Taxonomy" id="4794"/>
    <lineage>
        <taxon>Eukaryota</taxon>
        <taxon>Sar</taxon>
        <taxon>Stramenopiles</taxon>
        <taxon>Oomycota</taxon>
        <taxon>Peronosporales</taxon>
        <taxon>Peronosporaceae</taxon>
        <taxon>Phytophthora</taxon>
    </lineage>
</organism>
<comment type="function">
    <text>Induces local and distal defense responses (incompatible hypersensitive reaction) in plants from the solanaceae and cruciferae families. Elicits leaf necrosis and causes the accumulation of pathogenesis-related proteins. Might interact with the lipidic molecules of the plasma membrane.</text>
</comment>
<comment type="subcellular location">
    <subcellularLocation>
        <location>Secreted</location>
    </subcellularLocation>
</comment>
<comment type="similarity">
    <text evidence="2">Belongs to the elicitin family.</text>
</comment>
<sequence>TTCTSTQQTAAYVTLVSILSDSSFNQCATDSGYSMLTATALPTDAQYKLMCSSTACNTMIKKIVSLNAPNCDLTVPTSGLVLNVYEYANGFSTKCASL</sequence>
<dbReference type="SMR" id="P35696"/>
<dbReference type="GO" id="GO:0005576">
    <property type="term" value="C:extracellular region"/>
    <property type="evidence" value="ECO:0007669"/>
    <property type="project" value="UniProtKB-SubCell"/>
</dbReference>
<dbReference type="GO" id="GO:0052040">
    <property type="term" value="P:symbiont-mediated perturbation of host programmed cell death"/>
    <property type="evidence" value="ECO:0007669"/>
    <property type="project" value="UniProtKB-KW"/>
</dbReference>
<dbReference type="Gene3D" id="1.10.239.10">
    <property type="entry name" value="Elicitin domain"/>
    <property type="match status" value="1"/>
</dbReference>
<dbReference type="InterPro" id="IPR002200">
    <property type="entry name" value="Elicitin"/>
</dbReference>
<dbReference type="InterPro" id="IPR036470">
    <property type="entry name" value="Elicitin_sf"/>
</dbReference>
<dbReference type="Pfam" id="PF00964">
    <property type="entry name" value="Elicitin"/>
    <property type="match status" value="1"/>
</dbReference>
<dbReference type="PRINTS" id="PR00948">
    <property type="entry name" value="ELICITIN"/>
</dbReference>
<dbReference type="SMART" id="SM01187">
    <property type="entry name" value="Elicitin"/>
    <property type="match status" value="1"/>
</dbReference>
<dbReference type="SUPFAM" id="SSF48647">
    <property type="entry name" value="Fungal elicitin"/>
    <property type="match status" value="1"/>
</dbReference>
<name>ELIA_PHYDR</name>
<evidence type="ECO:0000250" key="1"/>
<evidence type="ECO:0000305" key="2"/>
<keyword id="KW-0903">Direct protein sequencing</keyword>
<keyword id="KW-1015">Disulfide bond</keyword>
<keyword id="KW-0928">Hypersensitive response elicitation</keyword>
<keyword id="KW-0964">Secreted</keyword>